<reference key="1">
    <citation type="journal article" date="1999" name="Nature">
        <title>Sequence and analysis of chromosome 4 of the plant Arabidopsis thaliana.</title>
        <authorList>
            <person name="Mayer K.F.X."/>
            <person name="Schueller C."/>
            <person name="Wambutt R."/>
            <person name="Murphy G."/>
            <person name="Volckaert G."/>
            <person name="Pohl T."/>
            <person name="Duesterhoeft A."/>
            <person name="Stiekema W."/>
            <person name="Entian K.-D."/>
            <person name="Terryn N."/>
            <person name="Harris B."/>
            <person name="Ansorge W."/>
            <person name="Brandt P."/>
            <person name="Grivell L.A."/>
            <person name="Rieger M."/>
            <person name="Weichselgartner M."/>
            <person name="de Simone V."/>
            <person name="Obermaier B."/>
            <person name="Mache R."/>
            <person name="Mueller M."/>
            <person name="Kreis M."/>
            <person name="Delseny M."/>
            <person name="Puigdomenech P."/>
            <person name="Watson M."/>
            <person name="Schmidtheini T."/>
            <person name="Reichert B."/>
            <person name="Portetelle D."/>
            <person name="Perez-Alonso M."/>
            <person name="Boutry M."/>
            <person name="Bancroft I."/>
            <person name="Vos P."/>
            <person name="Hoheisel J."/>
            <person name="Zimmermann W."/>
            <person name="Wedler H."/>
            <person name="Ridley P."/>
            <person name="Langham S.-A."/>
            <person name="McCullagh B."/>
            <person name="Bilham L."/>
            <person name="Robben J."/>
            <person name="van der Schueren J."/>
            <person name="Grymonprez B."/>
            <person name="Chuang Y.-J."/>
            <person name="Vandenbussche F."/>
            <person name="Braeken M."/>
            <person name="Weltjens I."/>
            <person name="Voet M."/>
            <person name="Bastiaens I."/>
            <person name="Aert R."/>
            <person name="Defoor E."/>
            <person name="Weitzenegger T."/>
            <person name="Bothe G."/>
            <person name="Ramsperger U."/>
            <person name="Hilbert H."/>
            <person name="Braun M."/>
            <person name="Holzer E."/>
            <person name="Brandt A."/>
            <person name="Peters S."/>
            <person name="van Staveren M."/>
            <person name="Dirkse W."/>
            <person name="Mooijman P."/>
            <person name="Klein Lankhorst R."/>
            <person name="Rose M."/>
            <person name="Hauf J."/>
            <person name="Koetter P."/>
            <person name="Berneiser S."/>
            <person name="Hempel S."/>
            <person name="Feldpausch M."/>
            <person name="Lamberth S."/>
            <person name="Van den Daele H."/>
            <person name="De Keyser A."/>
            <person name="Buysshaert C."/>
            <person name="Gielen J."/>
            <person name="Villarroel R."/>
            <person name="De Clercq R."/>
            <person name="van Montagu M."/>
            <person name="Rogers J."/>
            <person name="Cronin A."/>
            <person name="Quail M.A."/>
            <person name="Bray-Allen S."/>
            <person name="Clark L."/>
            <person name="Doggett J."/>
            <person name="Hall S."/>
            <person name="Kay M."/>
            <person name="Lennard N."/>
            <person name="McLay K."/>
            <person name="Mayes R."/>
            <person name="Pettett A."/>
            <person name="Rajandream M.A."/>
            <person name="Lyne M."/>
            <person name="Benes V."/>
            <person name="Rechmann S."/>
            <person name="Borkova D."/>
            <person name="Bloecker H."/>
            <person name="Scharfe M."/>
            <person name="Grimm M."/>
            <person name="Loehnert T.-H."/>
            <person name="Dose S."/>
            <person name="de Haan M."/>
            <person name="Maarse A.C."/>
            <person name="Schaefer M."/>
            <person name="Mueller-Auer S."/>
            <person name="Gabel C."/>
            <person name="Fuchs M."/>
            <person name="Fartmann B."/>
            <person name="Granderath K."/>
            <person name="Dauner D."/>
            <person name="Herzl A."/>
            <person name="Neumann S."/>
            <person name="Argiriou A."/>
            <person name="Vitale D."/>
            <person name="Liguori R."/>
            <person name="Piravandi E."/>
            <person name="Massenet O."/>
            <person name="Quigley F."/>
            <person name="Clabauld G."/>
            <person name="Muendlein A."/>
            <person name="Felber R."/>
            <person name="Schnabl S."/>
            <person name="Hiller R."/>
            <person name="Schmidt W."/>
            <person name="Lecharny A."/>
            <person name="Aubourg S."/>
            <person name="Chefdor F."/>
            <person name="Cooke R."/>
            <person name="Berger C."/>
            <person name="Monfort A."/>
            <person name="Casacuberta E."/>
            <person name="Gibbons T."/>
            <person name="Weber N."/>
            <person name="Vandenbol M."/>
            <person name="Bargues M."/>
            <person name="Terol J."/>
            <person name="Torres A."/>
            <person name="Perez-Perez A."/>
            <person name="Purnelle B."/>
            <person name="Bent E."/>
            <person name="Johnson S."/>
            <person name="Tacon D."/>
            <person name="Jesse T."/>
            <person name="Heijnen L."/>
            <person name="Schwarz S."/>
            <person name="Scholler P."/>
            <person name="Heber S."/>
            <person name="Francs P."/>
            <person name="Bielke C."/>
            <person name="Frishman D."/>
            <person name="Haase D."/>
            <person name="Lemcke K."/>
            <person name="Mewes H.-W."/>
            <person name="Stocker S."/>
            <person name="Zaccaria P."/>
            <person name="Bevan M."/>
            <person name="Wilson R.K."/>
            <person name="de la Bastide M."/>
            <person name="Habermann K."/>
            <person name="Parnell L."/>
            <person name="Dedhia N."/>
            <person name="Gnoj L."/>
            <person name="Schutz K."/>
            <person name="Huang E."/>
            <person name="Spiegel L."/>
            <person name="Sekhon M."/>
            <person name="Murray J."/>
            <person name="Sheet P."/>
            <person name="Cordes M."/>
            <person name="Abu-Threideh J."/>
            <person name="Stoneking T."/>
            <person name="Kalicki J."/>
            <person name="Graves T."/>
            <person name="Harmon G."/>
            <person name="Edwards J."/>
            <person name="Latreille P."/>
            <person name="Courtney L."/>
            <person name="Cloud J."/>
            <person name="Abbott A."/>
            <person name="Scott K."/>
            <person name="Johnson D."/>
            <person name="Minx P."/>
            <person name="Bentley D."/>
            <person name="Fulton B."/>
            <person name="Miller N."/>
            <person name="Greco T."/>
            <person name="Kemp K."/>
            <person name="Kramer J."/>
            <person name="Fulton L."/>
            <person name="Mardis E."/>
            <person name="Dante M."/>
            <person name="Pepin K."/>
            <person name="Hillier L.W."/>
            <person name="Nelson J."/>
            <person name="Spieth J."/>
            <person name="Ryan E."/>
            <person name="Andrews S."/>
            <person name="Geisel C."/>
            <person name="Layman D."/>
            <person name="Du H."/>
            <person name="Ali J."/>
            <person name="Berghoff A."/>
            <person name="Jones K."/>
            <person name="Drone K."/>
            <person name="Cotton M."/>
            <person name="Joshu C."/>
            <person name="Antonoiu B."/>
            <person name="Zidanic M."/>
            <person name="Strong C."/>
            <person name="Sun H."/>
            <person name="Lamar B."/>
            <person name="Yordan C."/>
            <person name="Ma P."/>
            <person name="Zhong J."/>
            <person name="Preston R."/>
            <person name="Vil D."/>
            <person name="Shekher M."/>
            <person name="Matero A."/>
            <person name="Shah R."/>
            <person name="Swaby I.K."/>
            <person name="O'Shaughnessy A."/>
            <person name="Rodriguez M."/>
            <person name="Hoffman J."/>
            <person name="Till S."/>
            <person name="Granat S."/>
            <person name="Shohdy N."/>
            <person name="Hasegawa A."/>
            <person name="Hameed A."/>
            <person name="Lodhi M."/>
            <person name="Johnson A."/>
            <person name="Chen E."/>
            <person name="Marra M.A."/>
            <person name="Martienssen R."/>
            <person name="McCombie W.R."/>
        </authorList>
    </citation>
    <scope>NUCLEOTIDE SEQUENCE [LARGE SCALE GENOMIC DNA]</scope>
    <source>
        <strain>cv. Columbia</strain>
    </source>
</reference>
<reference key="2">
    <citation type="journal article" date="2017" name="Plant J.">
        <title>Araport11: a complete reannotation of the Arabidopsis thaliana reference genome.</title>
        <authorList>
            <person name="Cheng C.Y."/>
            <person name="Krishnakumar V."/>
            <person name="Chan A.P."/>
            <person name="Thibaud-Nissen F."/>
            <person name="Schobel S."/>
            <person name="Town C.D."/>
        </authorList>
    </citation>
    <scope>GENOME REANNOTATION</scope>
    <source>
        <strain>cv. Columbia</strain>
    </source>
</reference>
<reference key="3">
    <citation type="journal article" date="2002" name="Crit. Rev. Plant Sci.">
        <title>Lectin receptor kinases in plants.</title>
        <authorList>
            <person name="Barre A."/>
            <person name="Herve C."/>
            <person name="Lescure B."/>
            <person name="Rouge P."/>
        </authorList>
    </citation>
    <scope>GENE FAMILY</scope>
</reference>
<reference key="4">
    <citation type="journal article" date="2009" name="J. Exp. Bot.">
        <title>Arabidopsis L-type lectin receptor kinases: phylogeny, classification, and expression profiles.</title>
        <authorList>
            <person name="Bouwmeester K."/>
            <person name="Govers F."/>
        </authorList>
    </citation>
    <scope>GENE FAMILY</scope>
    <scope>NOMENCLATURE</scope>
</reference>
<reference key="5">
    <citation type="journal article" date="2014" name="Mol. Plant Microbe Interact.">
        <title>Phenotypic analyses of Arabidopsis T-DNA insertion lines and expression profiling reveal that multiple L-type lectin receptor kinases are involved in plant immunity.</title>
        <authorList>
            <person name="Wang Y."/>
            <person name="Bouwmeester K."/>
            <person name="Beseh P."/>
            <person name="Shan W."/>
            <person name="Govers F."/>
        </authorList>
    </citation>
    <scope>FUNCTION</scope>
    <scope>DISRUPTION PHENOTYPE</scope>
    <source>
        <strain>cv. Columbia</strain>
    </source>
</reference>
<dbReference type="EC" id="2.7.11.1" evidence="3"/>
<dbReference type="EMBL" id="AF069298">
    <property type="protein sequence ID" value="AAC19274.1"/>
    <property type="molecule type" value="Genomic_DNA"/>
</dbReference>
<dbReference type="EMBL" id="AL161494">
    <property type="protein sequence ID" value="CAB80735.1"/>
    <property type="molecule type" value="Genomic_DNA"/>
</dbReference>
<dbReference type="EMBL" id="CP002687">
    <property type="protein sequence ID" value="AEE82168.1"/>
    <property type="molecule type" value="Genomic_DNA"/>
</dbReference>
<dbReference type="PIR" id="T01308">
    <property type="entry name" value="T01308"/>
</dbReference>
<dbReference type="RefSeq" id="NP_567234.1">
    <property type="nucleotide sequence ID" value="NM_116475.2"/>
</dbReference>
<dbReference type="SMR" id="O81291"/>
<dbReference type="FunCoup" id="O81291">
    <property type="interactions" value="193"/>
</dbReference>
<dbReference type="GlyCosmos" id="O81291">
    <property type="glycosylation" value="5 sites, No reported glycans"/>
</dbReference>
<dbReference type="GlyGen" id="O81291">
    <property type="glycosylation" value="5 sites"/>
</dbReference>
<dbReference type="iPTMnet" id="O81291"/>
<dbReference type="PaxDb" id="3702-AT4G02420.1"/>
<dbReference type="ProteomicsDB" id="238564"/>
<dbReference type="EnsemblPlants" id="AT4G02420.1">
    <property type="protein sequence ID" value="AT4G02420.1"/>
    <property type="gene ID" value="AT4G02420"/>
</dbReference>
<dbReference type="GeneID" id="828035"/>
<dbReference type="Gramene" id="AT4G02420.1">
    <property type="protein sequence ID" value="AT4G02420.1"/>
    <property type="gene ID" value="AT4G02420"/>
</dbReference>
<dbReference type="KEGG" id="ath:AT4G02420"/>
<dbReference type="Araport" id="AT4G02420"/>
<dbReference type="TAIR" id="AT4G02420">
    <property type="gene designation" value="LECRK-IV.4"/>
</dbReference>
<dbReference type="eggNOG" id="ENOG502QSJ4">
    <property type="taxonomic scope" value="Eukaryota"/>
</dbReference>
<dbReference type="HOGENOM" id="CLU_000288_62_3_1"/>
<dbReference type="InParanoid" id="O81291"/>
<dbReference type="OMA" id="WERKRLY"/>
<dbReference type="PhylomeDB" id="O81291"/>
<dbReference type="PRO" id="PR:O81291"/>
<dbReference type="Proteomes" id="UP000006548">
    <property type="component" value="Chromosome 4"/>
</dbReference>
<dbReference type="ExpressionAtlas" id="O81291">
    <property type="expression patterns" value="baseline and differential"/>
</dbReference>
<dbReference type="GO" id="GO:0005886">
    <property type="term" value="C:plasma membrane"/>
    <property type="evidence" value="ECO:0000250"/>
    <property type="project" value="UniProtKB"/>
</dbReference>
<dbReference type="GO" id="GO:0005524">
    <property type="term" value="F:ATP binding"/>
    <property type="evidence" value="ECO:0007669"/>
    <property type="project" value="UniProtKB-KW"/>
</dbReference>
<dbReference type="GO" id="GO:0030246">
    <property type="term" value="F:carbohydrate binding"/>
    <property type="evidence" value="ECO:0007669"/>
    <property type="project" value="UniProtKB-KW"/>
</dbReference>
<dbReference type="GO" id="GO:0106310">
    <property type="term" value="F:protein serine kinase activity"/>
    <property type="evidence" value="ECO:0007669"/>
    <property type="project" value="RHEA"/>
</dbReference>
<dbReference type="GO" id="GO:0004674">
    <property type="term" value="F:protein serine/threonine kinase activity"/>
    <property type="evidence" value="ECO:0007669"/>
    <property type="project" value="UniProtKB-KW"/>
</dbReference>
<dbReference type="GO" id="GO:0042742">
    <property type="term" value="P:defense response to bacterium"/>
    <property type="evidence" value="ECO:0000315"/>
    <property type="project" value="UniProtKB"/>
</dbReference>
<dbReference type="GO" id="GO:0002229">
    <property type="term" value="P:defense response to oomycetes"/>
    <property type="evidence" value="ECO:0000315"/>
    <property type="project" value="UniProtKB"/>
</dbReference>
<dbReference type="CDD" id="cd06899">
    <property type="entry name" value="lectin_legume_LecRK_Arcelin_ConA"/>
    <property type="match status" value="1"/>
</dbReference>
<dbReference type="CDD" id="cd14066">
    <property type="entry name" value="STKc_IRAK"/>
    <property type="match status" value="1"/>
</dbReference>
<dbReference type="FunFam" id="1.10.510.10:FF:000108">
    <property type="entry name" value="L-type lectin-domain containing receptor kinase S.4"/>
    <property type="match status" value="1"/>
</dbReference>
<dbReference type="FunFam" id="2.60.120.200:FF:000051">
    <property type="entry name" value="L-type lectin-domain containing receptor kinase V.9"/>
    <property type="match status" value="1"/>
</dbReference>
<dbReference type="FunFam" id="3.30.200.20:FF:000039">
    <property type="entry name" value="receptor-like protein kinase FERONIA"/>
    <property type="match status" value="1"/>
</dbReference>
<dbReference type="Gene3D" id="2.60.120.200">
    <property type="match status" value="1"/>
</dbReference>
<dbReference type="Gene3D" id="3.30.200.20">
    <property type="entry name" value="Phosphorylase Kinase, domain 1"/>
    <property type="match status" value="1"/>
</dbReference>
<dbReference type="Gene3D" id="1.10.510.10">
    <property type="entry name" value="Transferase(Phosphotransferase) domain 1"/>
    <property type="match status" value="1"/>
</dbReference>
<dbReference type="InterPro" id="IPR013320">
    <property type="entry name" value="ConA-like_dom_sf"/>
</dbReference>
<dbReference type="InterPro" id="IPR011009">
    <property type="entry name" value="Kinase-like_dom_sf"/>
</dbReference>
<dbReference type="InterPro" id="IPR050528">
    <property type="entry name" value="L-type_Lectin-RKs"/>
</dbReference>
<dbReference type="InterPro" id="IPR001220">
    <property type="entry name" value="Legume_lectin_dom"/>
</dbReference>
<dbReference type="InterPro" id="IPR000719">
    <property type="entry name" value="Prot_kinase_dom"/>
</dbReference>
<dbReference type="InterPro" id="IPR017441">
    <property type="entry name" value="Protein_kinase_ATP_BS"/>
</dbReference>
<dbReference type="InterPro" id="IPR008271">
    <property type="entry name" value="Ser/Thr_kinase_AS"/>
</dbReference>
<dbReference type="PANTHER" id="PTHR27007">
    <property type="match status" value="1"/>
</dbReference>
<dbReference type="Pfam" id="PF00139">
    <property type="entry name" value="Lectin_legB"/>
    <property type="match status" value="1"/>
</dbReference>
<dbReference type="Pfam" id="PF00069">
    <property type="entry name" value="Pkinase"/>
    <property type="match status" value="1"/>
</dbReference>
<dbReference type="SMART" id="SM00220">
    <property type="entry name" value="S_TKc"/>
    <property type="match status" value="1"/>
</dbReference>
<dbReference type="SUPFAM" id="SSF49899">
    <property type="entry name" value="Concanavalin A-like lectins/glucanases"/>
    <property type="match status" value="1"/>
</dbReference>
<dbReference type="SUPFAM" id="SSF56112">
    <property type="entry name" value="Protein kinase-like (PK-like)"/>
    <property type="match status" value="1"/>
</dbReference>
<dbReference type="PROSITE" id="PS00107">
    <property type="entry name" value="PROTEIN_KINASE_ATP"/>
    <property type="match status" value="1"/>
</dbReference>
<dbReference type="PROSITE" id="PS50011">
    <property type="entry name" value="PROTEIN_KINASE_DOM"/>
    <property type="match status" value="1"/>
</dbReference>
<dbReference type="PROSITE" id="PS00108">
    <property type="entry name" value="PROTEIN_KINASE_ST"/>
    <property type="match status" value="1"/>
</dbReference>
<sequence length="669" mass="75399">MFFIKLFTIFFLSFFWQSLKSSSQIIDFTYNGFRPPPTDISILGIATITPNGLLKLTNTTMQSTGHAFYTKPIRFKDSPNGTVSSFSTTFVFAIHSQIPIAHGMAFVIAPNPRLPFGSPLQYLGLFNVTNNGNVRNHVFAVELDTIMNIEFNDTNNNHVGIDINSLNSVKSSPAGYWDENDQFHNLTLISSKRMQVWVDFDGPTHLIDVTMAPFGEVKPRKPLVSIVRDLSSVLLQDMFVGFSSATGNIVSEIFVLGWSFGVNGEAQPLALSKLPRLPVWDLKPTRVYRFYKNWVPLISLLLIPFLLIIFLVRFIMKRRRKFAEEVEDWETEFGKNRLRFKDLYYATKGFKDKNILGSGGFGSVYKGIMPKTKKEIAVKRVSNESRQGLKEFVAEIVSIGQMSHRNLVPLVGYCRRRDELLLVYDYMPNGSLDKYLYNSPEVTLDWKQRFKVINGVASALFYLHEEWEQVVIHRDVKASNVLLDAELNGRLGDFGLAQLCDHGSDPQTTRVVGTWGYLAPDHIRTGRATTTTDVFAFGVLLLEVACGRRPIEINNQSGERVVLVDWVFRFWMEANILDAKDPNLGSEYDQKEVEMVLKLGLLCSHSDPLARPTMRQVLQYLRGDAMLPDLSPLDLRGSGIMLGTHNGSNESGMFTSGSSVAYSLLSSGR</sequence>
<accession>O81291</accession>
<feature type="signal peptide" evidence="2">
    <location>
        <begin position="1"/>
        <end position="23"/>
    </location>
</feature>
<feature type="chain" id="PRO_0000403088" description="L-type lectin-domain containing receptor kinase IV.4">
    <location>
        <begin position="24"/>
        <end position="669"/>
    </location>
</feature>
<feature type="topological domain" description="Extracellular" evidence="2">
    <location>
        <begin position="24"/>
        <end position="294"/>
    </location>
</feature>
<feature type="transmembrane region" description="Helical" evidence="2">
    <location>
        <begin position="295"/>
        <end position="315"/>
    </location>
</feature>
<feature type="topological domain" description="Cytoplasmic" evidence="2">
    <location>
        <begin position="316"/>
        <end position="669"/>
    </location>
</feature>
<feature type="domain" description="Protein kinase" evidence="3">
    <location>
        <begin position="350"/>
        <end position="627"/>
    </location>
</feature>
<feature type="region of interest" description="Legume-lectin like" evidence="2">
    <location>
        <begin position="26"/>
        <end position="260"/>
    </location>
</feature>
<feature type="active site" description="Proton acceptor" evidence="3">
    <location>
        <position position="475"/>
    </location>
</feature>
<feature type="binding site" evidence="3">
    <location>
        <begin position="356"/>
        <end position="364"/>
    </location>
    <ligand>
        <name>ATP</name>
        <dbReference type="ChEBI" id="CHEBI:30616"/>
    </ligand>
</feature>
<feature type="binding site" evidence="3">
    <location>
        <position position="379"/>
    </location>
    <ligand>
        <name>ATP</name>
        <dbReference type="ChEBI" id="CHEBI:30616"/>
    </ligand>
</feature>
<feature type="glycosylation site" description="N-linked (GlcNAc...) asparagine" evidence="2">
    <location>
        <position position="58"/>
    </location>
</feature>
<feature type="glycosylation site" description="N-linked (GlcNAc...) asparagine" evidence="2">
    <location>
        <position position="80"/>
    </location>
</feature>
<feature type="glycosylation site" description="N-linked (GlcNAc...) asparagine" evidence="2">
    <location>
        <position position="127"/>
    </location>
</feature>
<feature type="glycosylation site" description="N-linked (GlcNAc...) asparagine" evidence="2">
    <location>
        <position position="152"/>
    </location>
</feature>
<feature type="glycosylation site" description="N-linked (GlcNAc...) asparagine" evidence="2">
    <location>
        <position position="185"/>
    </location>
</feature>
<name>LRK44_ARATH</name>
<protein>
    <recommendedName>
        <fullName evidence="5">L-type lectin-domain containing receptor kinase IV.4</fullName>
        <shortName evidence="5">LecRK-IV.4</shortName>
        <ecNumber evidence="3">2.7.11.1</ecNumber>
    </recommendedName>
</protein>
<keyword id="KW-0067">ATP-binding</keyword>
<keyword id="KW-1003">Cell membrane</keyword>
<keyword id="KW-0325">Glycoprotein</keyword>
<keyword id="KW-0418">Kinase</keyword>
<keyword id="KW-0430">Lectin</keyword>
<keyword id="KW-0472">Membrane</keyword>
<keyword id="KW-0547">Nucleotide-binding</keyword>
<keyword id="KW-0611">Plant defense</keyword>
<keyword id="KW-0675">Receptor</keyword>
<keyword id="KW-1185">Reference proteome</keyword>
<keyword id="KW-0723">Serine/threonine-protein kinase</keyword>
<keyword id="KW-0732">Signal</keyword>
<keyword id="KW-0808">Transferase</keyword>
<keyword id="KW-0812">Transmembrane</keyword>
<keyword id="KW-1133">Transmembrane helix</keyword>
<organism>
    <name type="scientific">Arabidopsis thaliana</name>
    <name type="common">Mouse-ear cress</name>
    <dbReference type="NCBI Taxonomy" id="3702"/>
    <lineage>
        <taxon>Eukaryota</taxon>
        <taxon>Viridiplantae</taxon>
        <taxon>Streptophyta</taxon>
        <taxon>Embryophyta</taxon>
        <taxon>Tracheophyta</taxon>
        <taxon>Spermatophyta</taxon>
        <taxon>Magnoliopsida</taxon>
        <taxon>eudicotyledons</taxon>
        <taxon>Gunneridae</taxon>
        <taxon>Pentapetalae</taxon>
        <taxon>rosids</taxon>
        <taxon>malvids</taxon>
        <taxon>Brassicales</taxon>
        <taxon>Brassicaceae</taxon>
        <taxon>Camelineae</taxon>
        <taxon>Arabidopsis</taxon>
    </lineage>
</organism>
<evidence type="ECO:0000250" key="1">
    <source>
        <dbReference type="UniProtKB" id="Q9LSR8"/>
    </source>
</evidence>
<evidence type="ECO:0000255" key="2"/>
<evidence type="ECO:0000255" key="3">
    <source>
        <dbReference type="PROSITE-ProRule" id="PRU00159"/>
    </source>
</evidence>
<evidence type="ECO:0000269" key="4">
    <source>
    </source>
</evidence>
<evidence type="ECO:0000303" key="5">
    <source>
    </source>
</evidence>
<evidence type="ECO:0000305" key="6"/>
<evidence type="ECO:0000312" key="7">
    <source>
        <dbReference type="Araport" id="AT4G02420"/>
    </source>
</evidence>
<evidence type="ECO:0000312" key="8">
    <source>
        <dbReference type="EMBL" id="AAC19274.1"/>
    </source>
</evidence>
<proteinExistence type="inferred from homology"/>
<gene>
    <name evidence="5" type="primary">LECRK44</name>
    <name evidence="7" type="ordered locus">At4g02420</name>
    <name evidence="8" type="ORF">T14P8.4</name>
</gene>
<comment type="function">
    <text evidence="4">Involved in resistance response to the pathogenic oomycetes Phytophthora infestans and Phytophthora capsici and to the pathogenic bacteria Pseudomonas syringae.</text>
</comment>
<comment type="catalytic activity">
    <reaction evidence="3">
        <text>L-seryl-[protein] + ATP = O-phospho-L-seryl-[protein] + ADP + H(+)</text>
        <dbReference type="Rhea" id="RHEA:17989"/>
        <dbReference type="Rhea" id="RHEA-COMP:9863"/>
        <dbReference type="Rhea" id="RHEA-COMP:11604"/>
        <dbReference type="ChEBI" id="CHEBI:15378"/>
        <dbReference type="ChEBI" id="CHEBI:29999"/>
        <dbReference type="ChEBI" id="CHEBI:30616"/>
        <dbReference type="ChEBI" id="CHEBI:83421"/>
        <dbReference type="ChEBI" id="CHEBI:456216"/>
        <dbReference type="EC" id="2.7.11.1"/>
    </reaction>
</comment>
<comment type="catalytic activity">
    <reaction evidence="3">
        <text>L-threonyl-[protein] + ATP = O-phospho-L-threonyl-[protein] + ADP + H(+)</text>
        <dbReference type="Rhea" id="RHEA:46608"/>
        <dbReference type="Rhea" id="RHEA-COMP:11060"/>
        <dbReference type="Rhea" id="RHEA-COMP:11605"/>
        <dbReference type="ChEBI" id="CHEBI:15378"/>
        <dbReference type="ChEBI" id="CHEBI:30013"/>
        <dbReference type="ChEBI" id="CHEBI:30616"/>
        <dbReference type="ChEBI" id="CHEBI:61977"/>
        <dbReference type="ChEBI" id="CHEBI:456216"/>
        <dbReference type="EC" id="2.7.11.1"/>
    </reaction>
</comment>
<comment type="subcellular location">
    <subcellularLocation>
        <location evidence="1">Cell membrane</location>
        <topology evidence="2">Single-pass type I membrane protein</topology>
    </subcellularLocation>
</comment>
<comment type="disruption phenotype">
    <text evidence="4">Increased susceptibility to the oomycetes Phytophthora brassicae and Phytophthora capsici and to the bacteria Pseudomonas syringae, characterized by stronger necrotic symptoms and higher bacterial proliferation.</text>
</comment>
<comment type="similarity">
    <text evidence="6">In the C-terminal section; belongs to the protein kinase superfamily. Ser/Thr protein kinase family.</text>
</comment>
<comment type="similarity">
    <text evidence="6">In the N-terminal section; belongs to the leguminous lectin family.</text>
</comment>